<accession>C5D6C2</accession>
<protein>
    <recommendedName>
        <fullName evidence="2">tRNA (guanine-N(7)-)-methyltransferase</fullName>
        <ecNumber evidence="2">2.1.1.33</ecNumber>
    </recommendedName>
    <alternativeName>
        <fullName evidence="2">tRNA (guanine(46)-N(7))-methyltransferase</fullName>
    </alternativeName>
    <alternativeName>
        <fullName evidence="2">tRNA(m7G46)-methyltransferase</fullName>
    </alternativeName>
</protein>
<feature type="chain" id="PRO_1000213441" description="tRNA (guanine-N(7)-)-methyltransferase">
    <location>
        <begin position="1"/>
        <end position="220"/>
    </location>
</feature>
<feature type="region of interest" description="Interaction with RNA" evidence="2">
    <location>
        <begin position="124"/>
        <end position="129"/>
    </location>
</feature>
<feature type="active site" evidence="1">
    <location>
        <position position="118"/>
    </location>
</feature>
<feature type="binding site" evidence="2">
    <location>
        <position position="44"/>
    </location>
    <ligand>
        <name>S-adenosyl-L-methionine</name>
        <dbReference type="ChEBI" id="CHEBI:59789"/>
    </ligand>
</feature>
<feature type="binding site" evidence="2">
    <location>
        <position position="69"/>
    </location>
    <ligand>
        <name>S-adenosyl-L-methionine</name>
        <dbReference type="ChEBI" id="CHEBI:59789"/>
    </ligand>
</feature>
<feature type="binding site" evidence="2">
    <location>
        <position position="96"/>
    </location>
    <ligand>
        <name>S-adenosyl-L-methionine</name>
        <dbReference type="ChEBI" id="CHEBI:59789"/>
    </ligand>
</feature>
<feature type="binding site" evidence="2">
    <location>
        <position position="118"/>
    </location>
    <ligand>
        <name>S-adenosyl-L-methionine</name>
        <dbReference type="ChEBI" id="CHEBI:59789"/>
    </ligand>
</feature>
<feature type="binding site" evidence="2">
    <location>
        <position position="122"/>
    </location>
    <ligand>
        <name>substrate</name>
    </ligand>
</feature>
<feature type="binding site" evidence="2">
    <location>
        <position position="154"/>
    </location>
    <ligand>
        <name>substrate</name>
    </ligand>
</feature>
<feature type="binding site" evidence="2">
    <location>
        <begin position="191"/>
        <end position="194"/>
    </location>
    <ligand>
        <name>substrate</name>
    </ligand>
</feature>
<name>TRMB_GEOSW</name>
<gene>
    <name evidence="2" type="primary">trmB</name>
    <name type="ordered locus">GWCH70_2748</name>
</gene>
<evidence type="ECO:0000250" key="1"/>
<evidence type="ECO:0000255" key="2">
    <source>
        <dbReference type="HAMAP-Rule" id="MF_01057"/>
    </source>
</evidence>
<reference key="1">
    <citation type="submission" date="2009-06" db="EMBL/GenBank/DDBJ databases">
        <title>Complete sequence of chromosome of Geopacillus sp. WCH70.</title>
        <authorList>
            <consortium name="US DOE Joint Genome Institute"/>
            <person name="Lucas S."/>
            <person name="Copeland A."/>
            <person name="Lapidus A."/>
            <person name="Glavina del Rio T."/>
            <person name="Dalin E."/>
            <person name="Tice H."/>
            <person name="Bruce D."/>
            <person name="Goodwin L."/>
            <person name="Pitluck S."/>
            <person name="Chertkov O."/>
            <person name="Brettin T."/>
            <person name="Detter J.C."/>
            <person name="Han C."/>
            <person name="Larimer F."/>
            <person name="Land M."/>
            <person name="Hauser L."/>
            <person name="Kyrpides N."/>
            <person name="Mikhailova N."/>
            <person name="Brumm P."/>
            <person name="Mead D.A."/>
            <person name="Richardson P."/>
        </authorList>
    </citation>
    <scope>NUCLEOTIDE SEQUENCE [LARGE SCALE GENOMIC DNA]</scope>
    <source>
        <strain>WCH70</strain>
    </source>
</reference>
<dbReference type="EC" id="2.1.1.33" evidence="2"/>
<dbReference type="EMBL" id="CP001638">
    <property type="protein sequence ID" value="ACS25438.1"/>
    <property type="molecule type" value="Genomic_DNA"/>
</dbReference>
<dbReference type="SMR" id="C5D6C2"/>
<dbReference type="STRING" id="471223.GWCH70_2748"/>
<dbReference type="KEGG" id="gwc:GWCH70_2748"/>
<dbReference type="eggNOG" id="COG0220">
    <property type="taxonomic scope" value="Bacteria"/>
</dbReference>
<dbReference type="HOGENOM" id="CLU_050910_2_1_9"/>
<dbReference type="OrthoDB" id="9802090at2"/>
<dbReference type="UniPathway" id="UPA00989"/>
<dbReference type="GO" id="GO:0043527">
    <property type="term" value="C:tRNA methyltransferase complex"/>
    <property type="evidence" value="ECO:0007669"/>
    <property type="project" value="TreeGrafter"/>
</dbReference>
<dbReference type="GO" id="GO:0008176">
    <property type="term" value="F:tRNA (guanine(46)-N7)-methyltransferase activity"/>
    <property type="evidence" value="ECO:0007669"/>
    <property type="project" value="UniProtKB-UniRule"/>
</dbReference>
<dbReference type="CDD" id="cd02440">
    <property type="entry name" value="AdoMet_MTases"/>
    <property type="match status" value="1"/>
</dbReference>
<dbReference type="FunFam" id="3.40.50.150:FF:000035">
    <property type="entry name" value="tRNA (guanine-N(7)-)-methyltransferase"/>
    <property type="match status" value="1"/>
</dbReference>
<dbReference type="Gene3D" id="3.40.50.150">
    <property type="entry name" value="Vaccinia Virus protein VP39"/>
    <property type="match status" value="1"/>
</dbReference>
<dbReference type="HAMAP" id="MF_01057">
    <property type="entry name" value="tRNA_methyltr_TrmB"/>
    <property type="match status" value="1"/>
</dbReference>
<dbReference type="InterPro" id="IPR029063">
    <property type="entry name" value="SAM-dependent_MTases_sf"/>
</dbReference>
<dbReference type="InterPro" id="IPR003358">
    <property type="entry name" value="tRNA_(Gua-N-7)_MeTrfase_Trmb"/>
</dbReference>
<dbReference type="InterPro" id="IPR055361">
    <property type="entry name" value="tRNA_methyltr_TrmB_bact"/>
</dbReference>
<dbReference type="NCBIfam" id="NF001080">
    <property type="entry name" value="PRK00121.2-2"/>
    <property type="match status" value="1"/>
</dbReference>
<dbReference type="NCBIfam" id="TIGR00091">
    <property type="entry name" value="tRNA (guanosine(46)-N7)-methyltransferase TrmB"/>
    <property type="match status" value="1"/>
</dbReference>
<dbReference type="PANTHER" id="PTHR23417">
    <property type="entry name" value="3-DEOXY-D-MANNO-OCTULOSONIC-ACID TRANSFERASE/TRNA GUANINE-N 7 - -METHYLTRANSFERASE"/>
    <property type="match status" value="1"/>
</dbReference>
<dbReference type="PANTHER" id="PTHR23417:SF14">
    <property type="entry name" value="PENTACOTRIPEPTIDE-REPEAT REGION OF PRORP DOMAIN-CONTAINING PROTEIN"/>
    <property type="match status" value="1"/>
</dbReference>
<dbReference type="Pfam" id="PF02390">
    <property type="entry name" value="Methyltransf_4"/>
    <property type="match status" value="1"/>
</dbReference>
<dbReference type="SUPFAM" id="SSF53335">
    <property type="entry name" value="S-adenosyl-L-methionine-dependent methyltransferases"/>
    <property type="match status" value="1"/>
</dbReference>
<dbReference type="PROSITE" id="PS51625">
    <property type="entry name" value="SAM_MT_TRMB"/>
    <property type="match status" value="1"/>
</dbReference>
<organism>
    <name type="scientific">Geobacillus sp. (strain WCH70)</name>
    <dbReference type="NCBI Taxonomy" id="471223"/>
    <lineage>
        <taxon>Bacteria</taxon>
        <taxon>Bacillati</taxon>
        <taxon>Bacillota</taxon>
        <taxon>Bacilli</taxon>
        <taxon>Bacillales</taxon>
        <taxon>Anoxybacillaceae</taxon>
        <taxon>Geobacillus</taxon>
    </lineage>
</organism>
<sequence length="220" mass="25775">MRLRNKPWAKEKIAAYPQYVIPNPEEHKGRWNELFGNDHPIHIEIGTGKGKFITEMAKANPNINYIGIELYPSVLVSALDKLIENELPNLRLLNVNAKDLTNFFAEGEIERIYLNFSDPWPKKRHEKRRLTYRAFLELYEKVLVDEGEIHFKTDNQAFFEYSLVSFSQYGLVLTYVSLDLHNSDFEGNVMTEYEEKFSAKGNRIYRCEVKYPPKHQKAGL</sequence>
<comment type="function">
    <text evidence="2">Catalyzes the formation of N(7)-methylguanine at position 46 (m7G46) in tRNA.</text>
</comment>
<comment type="catalytic activity">
    <reaction evidence="2">
        <text>guanosine(46) in tRNA + S-adenosyl-L-methionine = N(7)-methylguanosine(46) in tRNA + S-adenosyl-L-homocysteine</text>
        <dbReference type="Rhea" id="RHEA:42708"/>
        <dbReference type="Rhea" id="RHEA-COMP:10188"/>
        <dbReference type="Rhea" id="RHEA-COMP:10189"/>
        <dbReference type="ChEBI" id="CHEBI:57856"/>
        <dbReference type="ChEBI" id="CHEBI:59789"/>
        <dbReference type="ChEBI" id="CHEBI:74269"/>
        <dbReference type="ChEBI" id="CHEBI:74480"/>
        <dbReference type="EC" id="2.1.1.33"/>
    </reaction>
</comment>
<comment type="pathway">
    <text evidence="2">tRNA modification; N(7)-methylguanine-tRNA biosynthesis.</text>
</comment>
<comment type="similarity">
    <text evidence="2">Belongs to the class I-like SAM-binding methyltransferase superfamily. TrmB family.</text>
</comment>
<proteinExistence type="inferred from homology"/>
<keyword id="KW-0489">Methyltransferase</keyword>
<keyword id="KW-0949">S-adenosyl-L-methionine</keyword>
<keyword id="KW-0808">Transferase</keyword>
<keyword id="KW-0819">tRNA processing</keyword>